<evidence type="ECO:0000250" key="1"/>
<evidence type="ECO:0000250" key="2">
    <source>
        <dbReference type="UniProtKB" id="O95551"/>
    </source>
</evidence>
<evidence type="ECO:0000250" key="3">
    <source>
        <dbReference type="UniProtKB" id="P31384"/>
    </source>
</evidence>
<evidence type="ECO:0000305" key="4"/>
<keyword id="KW-0010">Activator</keyword>
<keyword id="KW-0963">Cytoplasm</keyword>
<keyword id="KW-0269">Exonuclease</keyword>
<keyword id="KW-0378">Hydrolase</keyword>
<keyword id="KW-0433">Leucine-rich repeat</keyword>
<keyword id="KW-0460">Magnesium</keyword>
<keyword id="KW-0479">Metal-binding</keyword>
<keyword id="KW-0540">Nuclease</keyword>
<keyword id="KW-0539">Nucleus</keyword>
<keyword id="KW-1185">Reference proteome</keyword>
<keyword id="KW-0677">Repeat</keyword>
<keyword id="KW-0678">Repressor</keyword>
<keyword id="KW-0694">RNA-binding</keyword>
<keyword id="KW-0804">Transcription</keyword>
<keyword id="KW-0805">Transcription regulation</keyword>
<reference key="1">
    <citation type="journal article" date="2001" name="Nature">
        <title>Genome sequence and gene compaction of the eukaryote parasite Encephalitozoon cuniculi.</title>
        <authorList>
            <person name="Katinka M.D."/>
            <person name="Duprat S."/>
            <person name="Cornillot E."/>
            <person name="Metenier G."/>
            <person name="Thomarat F."/>
            <person name="Prensier G."/>
            <person name="Barbe V."/>
            <person name="Peyretaillade E."/>
            <person name="Brottier P."/>
            <person name="Wincker P."/>
            <person name="Delbac F."/>
            <person name="El Alaoui H."/>
            <person name="Peyret P."/>
            <person name="Saurin W."/>
            <person name="Gouy M."/>
            <person name="Weissenbach J."/>
            <person name="Vivares C.P."/>
        </authorList>
    </citation>
    <scope>NUCLEOTIDE SEQUENCE [LARGE SCALE GENOMIC DNA]</scope>
    <source>
        <strain>GB-M1</strain>
    </source>
</reference>
<name>CCR4_ENCCU</name>
<comment type="function">
    <text evidence="3">Acts as a catalytic component of the CCR4-NOT core complex, which in the nucleus seems to be a general transcription factor, and in the cytoplasm the major mRNA deadenylase involved in mRNA turnover (By similarity). Ccr4 has 3'-5' RNase activity with a strong preference for polyadenylated substrates and also low exonuclease activity towards single-stranded DNA (By similarity).</text>
</comment>
<comment type="catalytic activity">
    <reaction>
        <text>Exonucleolytic cleavage of poly(A) to 5'-AMP.</text>
        <dbReference type="EC" id="3.1.13.4"/>
    </reaction>
</comment>
<comment type="cofactor">
    <cofactor evidence="1">
        <name>Mg(2+)</name>
        <dbReference type="ChEBI" id="CHEBI:18420"/>
    </cofactor>
</comment>
<comment type="subunit">
    <text evidence="1">Component of the CCR4-NOT core complex.</text>
</comment>
<comment type="subcellular location">
    <subcellularLocation>
        <location evidence="1">Cytoplasm</location>
    </subcellularLocation>
    <subcellularLocation>
        <location evidence="1">Nucleus</location>
    </subcellularLocation>
</comment>
<comment type="similarity">
    <text evidence="4">Belongs to the CCR4/nocturin family.</text>
</comment>
<sequence length="493" mass="56489">MAEECLVSRKKFGGKAMEVRSEMWTGLDLCSQGIKNISKSLFDMRFIRTLNLANNEIEVIPREICNLRHLEVLNLSKNKIRSIPPEIGKIVSLRELNLSDNLISNIPMEMGTLYNLEVFEIANNPLIVPFNTLIRDKKLLQFCREHNTGYPPPNDRLWIECTGKNVFYGDTVSVGTFNILSNIYATRMTYAPSWVINSEFRREGVLQEIVLYNVDILCLQEIELYSFFDFYKEQLEMRCNYDSIIYPRGRVKSVPDKKNVDGCAIFWRRSKFRLIAQFPIDFHQKVIQDTRFNTNQELLDRYGKKDNIAIGALLERPNGQQVLVMNTHIFWDPDYPDIKLLQVLLLVEEIKRVSSRHPNACLLLQGDFNSLRSSSVYKSITTPVIDFADFGDTMQHLSNQQFGDGLGLNDAYSNQDLGFTNFTPGFKGVIDYIFYGGGISLASVLSPVEDEYTENVAGLPNMHFPSDHIFLGAKFAFPNKNISQNAFGRNSRQ</sequence>
<accession>Q8SU52</accession>
<feature type="chain" id="PRO_0000388439" description="Probable CCR4-Not complex 3'-5'-exoribonuclease subunit Ccr4">
    <location>
        <begin position="1"/>
        <end position="493"/>
    </location>
</feature>
<feature type="repeat" description="LRR 1">
    <location>
        <begin position="23"/>
        <end position="44"/>
    </location>
</feature>
<feature type="repeat" description="LRR 2">
    <location>
        <begin position="46"/>
        <end position="67"/>
    </location>
</feature>
<feature type="repeat" description="LRR 3">
    <location>
        <begin position="69"/>
        <end position="90"/>
    </location>
</feature>
<feature type="repeat" description="LRR 4">
    <location>
        <begin position="92"/>
        <end position="113"/>
    </location>
</feature>
<feature type="repeat" description="LRR 5">
    <location>
        <begin position="115"/>
        <end position="134"/>
    </location>
</feature>
<feature type="binding site" evidence="2">
    <location>
        <position position="221"/>
    </location>
    <ligand>
        <name>Mg(2+)</name>
        <dbReference type="ChEBI" id="CHEBI:18420"/>
    </ligand>
</feature>
<gene>
    <name type="primary">CCR4</name>
    <name type="ordered locus">ECU11_0770</name>
</gene>
<proteinExistence type="inferred from homology"/>
<protein>
    <recommendedName>
        <fullName evidence="4">Probable CCR4-Not complex 3'-5'-exoribonuclease subunit Ccr4</fullName>
        <ecNumber>3.1.13.4</ecNumber>
    </recommendedName>
    <alternativeName>
        <fullName>Carbon catabolite repressor protein 4</fullName>
    </alternativeName>
    <alternativeName>
        <fullName>Cytoplasmic deadenylase</fullName>
    </alternativeName>
    <alternativeName>
        <fullName>Glucose-repressible alcohol dehydrogenase transcriptional effector</fullName>
    </alternativeName>
</protein>
<dbReference type="EC" id="3.1.13.4"/>
<dbReference type="EMBL" id="AL590450">
    <property type="protein sequence ID" value="CAD25987.1"/>
    <property type="molecule type" value="Genomic_DNA"/>
</dbReference>
<dbReference type="RefSeq" id="NP_586383.1">
    <property type="nucleotide sequence ID" value="NM_001042216.1"/>
</dbReference>
<dbReference type="SMR" id="Q8SU52"/>
<dbReference type="STRING" id="284813.Q8SU52"/>
<dbReference type="GeneID" id="860036"/>
<dbReference type="KEGG" id="ecu:ECU11_0770"/>
<dbReference type="VEuPathDB" id="MicrosporidiaDB:ECU11_0770"/>
<dbReference type="HOGENOM" id="CLU_016428_4_2_1"/>
<dbReference type="InParanoid" id="Q8SU52"/>
<dbReference type="OMA" id="EHRMVAP"/>
<dbReference type="OrthoDB" id="428734at2759"/>
<dbReference type="Proteomes" id="UP000000819">
    <property type="component" value="Chromosome XI"/>
</dbReference>
<dbReference type="GO" id="GO:0005737">
    <property type="term" value="C:cytoplasm"/>
    <property type="evidence" value="ECO:0007669"/>
    <property type="project" value="UniProtKB-SubCell"/>
</dbReference>
<dbReference type="GO" id="GO:0005634">
    <property type="term" value="C:nucleus"/>
    <property type="evidence" value="ECO:0007669"/>
    <property type="project" value="UniProtKB-SubCell"/>
</dbReference>
<dbReference type="GO" id="GO:0046872">
    <property type="term" value="F:metal ion binding"/>
    <property type="evidence" value="ECO:0007669"/>
    <property type="project" value="UniProtKB-KW"/>
</dbReference>
<dbReference type="GO" id="GO:0004535">
    <property type="term" value="F:poly(A)-specific ribonuclease activity"/>
    <property type="evidence" value="ECO:0007669"/>
    <property type="project" value="UniProtKB-EC"/>
</dbReference>
<dbReference type="GO" id="GO:0003723">
    <property type="term" value="F:RNA binding"/>
    <property type="evidence" value="ECO:0007669"/>
    <property type="project" value="UniProtKB-KW"/>
</dbReference>
<dbReference type="Gene3D" id="3.60.10.10">
    <property type="entry name" value="Endonuclease/exonuclease/phosphatase"/>
    <property type="match status" value="1"/>
</dbReference>
<dbReference type="Gene3D" id="3.80.10.10">
    <property type="entry name" value="Ribonuclease Inhibitor"/>
    <property type="match status" value="1"/>
</dbReference>
<dbReference type="InterPro" id="IPR050410">
    <property type="entry name" value="CCR4/nocturin_mRNA_transcr"/>
</dbReference>
<dbReference type="InterPro" id="IPR036691">
    <property type="entry name" value="Endo/exonu/phosph_ase_sf"/>
</dbReference>
<dbReference type="InterPro" id="IPR005135">
    <property type="entry name" value="Endo/exonuclease/phosphatase"/>
</dbReference>
<dbReference type="InterPro" id="IPR001611">
    <property type="entry name" value="Leu-rich_rpt"/>
</dbReference>
<dbReference type="InterPro" id="IPR003591">
    <property type="entry name" value="Leu-rich_rpt_typical-subtyp"/>
</dbReference>
<dbReference type="InterPro" id="IPR032675">
    <property type="entry name" value="LRR_dom_sf"/>
</dbReference>
<dbReference type="InterPro" id="IPR055414">
    <property type="entry name" value="LRR_R13L4/SHOC2-like"/>
</dbReference>
<dbReference type="PANTHER" id="PTHR12121">
    <property type="entry name" value="CARBON CATABOLITE REPRESSOR PROTEIN 4"/>
    <property type="match status" value="1"/>
</dbReference>
<dbReference type="PANTHER" id="PTHR12121:SF100">
    <property type="entry name" value="POLY(A)-SPECIFIC RIBONUCLEASE"/>
    <property type="match status" value="1"/>
</dbReference>
<dbReference type="Pfam" id="PF03372">
    <property type="entry name" value="Exo_endo_phos"/>
    <property type="match status" value="1"/>
</dbReference>
<dbReference type="Pfam" id="PF23598">
    <property type="entry name" value="LRR_14"/>
    <property type="match status" value="1"/>
</dbReference>
<dbReference type="SMART" id="SM00369">
    <property type="entry name" value="LRR_TYP"/>
    <property type="match status" value="3"/>
</dbReference>
<dbReference type="SUPFAM" id="SSF56219">
    <property type="entry name" value="DNase I-like"/>
    <property type="match status" value="1"/>
</dbReference>
<dbReference type="SUPFAM" id="SSF52058">
    <property type="entry name" value="L domain-like"/>
    <property type="match status" value="1"/>
</dbReference>
<dbReference type="PROSITE" id="PS51450">
    <property type="entry name" value="LRR"/>
    <property type="match status" value="3"/>
</dbReference>
<organism>
    <name type="scientific">Encephalitozoon cuniculi (strain GB-M1)</name>
    <name type="common">Microsporidian parasite</name>
    <dbReference type="NCBI Taxonomy" id="284813"/>
    <lineage>
        <taxon>Eukaryota</taxon>
        <taxon>Fungi</taxon>
        <taxon>Fungi incertae sedis</taxon>
        <taxon>Microsporidia</taxon>
        <taxon>Unikaryonidae</taxon>
        <taxon>Encephalitozoon</taxon>
    </lineage>
</organism>